<keyword id="KW-0333">Golgi apparatus</keyword>
<keyword id="KW-0472">Membrane</keyword>
<keyword id="KW-0653">Protein transport</keyword>
<keyword id="KW-1185">Reference proteome</keyword>
<keyword id="KW-0813">Transport</keyword>
<feature type="chain" id="PRO_0000339318" description="Conserved oligomeric Golgi complex subunit 6">
    <location>
        <begin position="1"/>
        <end position="832"/>
    </location>
</feature>
<protein>
    <recommendedName>
        <fullName>Conserved oligomeric Golgi complex subunit 6</fullName>
        <shortName>COG complex subunit 6</shortName>
    </recommendedName>
    <alternativeName>
        <fullName>Component of oligomeric Golgi complex 6</fullName>
    </alternativeName>
</protein>
<proteinExistence type="inferred from homology"/>
<organism>
    <name type="scientific">Candida glabrata (strain ATCC 2001 / BCRC 20586 / JCM 3761 / NBRC 0622 / NRRL Y-65 / CBS 138)</name>
    <name type="common">Yeast</name>
    <name type="synonym">Nakaseomyces glabratus</name>
    <dbReference type="NCBI Taxonomy" id="284593"/>
    <lineage>
        <taxon>Eukaryota</taxon>
        <taxon>Fungi</taxon>
        <taxon>Dikarya</taxon>
        <taxon>Ascomycota</taxon>
        <taxon>Saccharomycotina</taxon>
        <taxon>Saccharomycetes</taxon>
        <taxon>Saccharomycetales</taxon>
        <taxon>Saccharomycetaceae</taxon>
        <taxon>Nakaseomyces</taxon>
    </lineage>
</organism>
<sequence length="832" mass="96282">MEFIDYQAFETAPDNNDKSGTNGEVSLPEPVSRLNISSFSLDYKPLKDNFKLPSILSNVETSLLQTKADVQDDTAMAQKLKKDTSNLYDRMSDYVDLSIQNFGTKNIKDSTPIPEATTRKTLVEPSSIDLEKSNEILAKKLSKVLNEYDTSYHHTIKLRKSLKILEKNRDKLGISEEKLISPDYIGTLARKSLRTDLETQLLKDHVTVLEDFKPIVRRIKRLAAPVQQIENIGEEILKNDKETFSQKYISDIDDCRNHLLKLEIKKKILKALQSKFTLNQLEDDLIENGPLKEEIFDIVDKLTKMKEHATYLLALPNSKAGEVLIKQTNITLDTINKKISNYLIDYMYTFESNSNMGTKHVIDPTERNLALFQKGLVYLSNDIQYYDDFLKRVTTMRSKTLLDEFLSQFGTTSELSTTISSSEDPVRYIGDVLATIHTMIANEVDFVKSLFKFTSEDMDKSSSMIINNNAQYFDGLDLKLVNDIVQYLANSCKLRIEQVIRFEENKVINFEITQLLDLYSSMFVNKGIRDDNPLVLHLIQLRDISEKKIINSLTKQLAETENTQISSPDLLPPQWLSDYLNSITELFDHVERLYGGKRFSKDDIDSDKYMFPYDTLKTVIEEPFMTSLIKQIKDSYPLAKKKEEIRIVMLTLQINCFEMINFRLQPYSLSIFSYDESCKHILENIQHTLDETVEKLQKLQISLLFERTGLNMYYNLMNMIFPIDSIQDEIDYDMYMSLVDNPLMSLENLEKNIHEKLNDYLPQALPDFQDNLLIKLTSPSIADDVCEICFRTLTDFYCIFRRILKHLYPDNKEKVEAILNFTESEFKTLAGV</sequence>
<evidence type="ECO:0000250" key="1"/>
<evidence type="ECO:0000305" key="2"/>
<reference key="1">
    <citation type="journal article" date="2004" name="Nature">
        <title>Genome evolution in yeasts.</title>
        <authorList>
            <person name="Dujon B."/>
            <person name="Sherman D."/>
            <person name="Fischer G."/>
            <person name="Durrens P."/>
            <person name="Casaregola S."/>
            <person name="Lafontaine I."/>
            <person name="de Montigny J."/>
            <person name="Marck C."/>
            <person name="Neuveglise C."/>
            <person name="Talla E."/>
            <person name="Goffard N."/>
            <person name="Frangeul L."/>
            <person name="Aigle M."/>
            <person name="Anthouard V."/>
            <person name="Babour A."/>
            <person name="Barbe V."/>
            <person name="Barnay S."/>
            <person name="Blanchin S."/>
            <person name="Beckerich J.-M."/>
            <person name="Beyne E."/>
            <person name="Bleykasten C."/>
            <person name="Boisrame A."/>
            <person name="Boyer J."/>
            <person name="Cattolico L."/>
            <person name="Confanioleri F."/>
            <person name="de Daruvar A."/>
            <person name="Despons L."/>
            <person name="Fabre E."/>
            <person name="Fairhead C."/>
            <person name="Ferry-Dumazet H."/>
            <person name="Groppi A."/>
            <person name="Hantraye F."/>
            <person name="Hennequin C."/>
            <person name="Jauniaux N."/>
            <person name="Joyet P."/>
            <person name="Kachouri R."/>
            <person name="Kerrest A."/>
            <person name="Koszul R."/>
            <person name="Lemaire M."/>
            <person name="Lesur I."/>
            <person name="Ma L."/>
            <person name="Muller H."/>
            <person name="Nicaud J.-M."/>
            <person name="Nikolski M."/>
            <person name="Oztas S."/>
            <person name="Ozier-Kalogeropoulos O."/>
            <person name="Pellenz S."/>
            <person name="Potier S."/>
            <person name="Richard G.-F."/>
            <person name="Straub M.-L."/>
            <person name="Suleau A."/>
            <person name="Swennen D."/>
            <person name="Tekaia F."/>
            <person name="Wesolowski-Louvel M."/>
            <person name="Westhof E."/>
            <person name="Wirth B."/>
            <person name="Zeniou-Meyer M."/>
            <person name="Zivanovic Y."/>
            <person name="Bolotin-Fukuhara M."/>
            <person name="Thierry A."/>
            <person name="Bouchier C."/>
            <person name="Caudron B."/>
            <person name="Scarpelli C."/>
            <person name="Gaillardin C."/>
            <person name="Weissenbach J."/>
            <person name="Wincker P."/>
            <person name="Souciet J.-L."/>
        </authorList>
    </citation>
    <scope>NUCLEOTIDE SEQUENCE [LARGE SCALE GENOMIC DNA]</scope>
    <source>
        <strain>ATCC 2001 / BCRC 20586 / JCM 3761 / NBRC 0622 / NRRL Y-65 / CBS 138</strain>
    </source>
</reference>
<dbReference type="EMBL" id="CR380953">
    <property type="protein sequence ID" value="CAG59354.1"/>
    <property type="molecule type" value="Genomic_DNA"/>
</dbReference>
<dbReference type="RefSeq" id="XP_446427.1">
    <property type="nucleotide sequence ID" value="XM_446427.1"/>
</dbReference>
<dbReference type="SMR" id="Q6FTL7"/>
<dbReference type="FunCoup" id="Q6FTL7">
    <property type="interactions" value="296"/>
</dbReference>
<dbReference type="STRING" id="284593.Q6FTL7"/>
<dbReference type="EnsemblFungi" id="CAGL0G01496g-T">
    <property type="protein sequence ID" value="CAGL0G01496g-T-p1"/>
    <property type="gene ID" value="CAGL0G01496g"/>
</dbReference>
<dbReference type="GeneID" id="2888193"/>
<dbReference type="KEGG" id="cgr:2888193"/>
<dbReference type="CGD" id="CAL0137579">
    <property type="gene designation" value="COG6"/>
</dbReference>
<dbReference type="VEuPathDB" id="FungiDB:CAGL0G01496g"/>
<dbReference type="eggNOG" id="KOG3758">
    <property type="taxonomic scope" value="Eukaryota"/>
</dbReference>
<dbReference type="HOGENOM" id="CLU_017837_0_0_1"/>
<dbReference type="InParanoid" id="Q6FTL7"/>
<dbReference type="Proteomes" id="UP000002428">
    <property type="component" value="Chromosome G"/>
</dbReference>
<dbReference type="GO" id="GO:0000139">
    <property type="term" value="C:Golgi membrane"/>
    <property type="evidence" value="ECO:0007669"/>
    <property type="project" value="UniProtKB-SubCell"/>
</dbReference>
<dbReference type="GO" id="GO:0017119">
    <property type="term" value="C:Golgi transport complex"/>
    <property type="evidence" value="ECO:0007669"/>
    <property type="project" value="EnsemblFungi"/>
</dbReference>
<dbReference type="GO" id="GO:0032258">
    <property type="term" value="P:cytoplasm to vacuole targeting by the Cvt pathway"/>
    <property type="evidence" value="ECO:0007669"/>
    <property type="project" value="EnsemblFungi"/>
</dbReference>
<dbReference type="GO" id="GO:0006891">
    <property type="term" value="P:intra-Golgi vesicle-mediated transport"/>
    <property type="evidence" value="ECO:0007669"/>
    <property type="project" value="EnsemblFungi"/>
</dbReference>
<dbReference type="InterPro" id="IPR010490">
    <property type="entry name" value="COG6"/>
</dbReference>
<dbReference type="InterPro" id="IPR048369">
    <property type="entry name" value="COG6_C"/>
</dbReference>
<dbReference type="InterPro" id="IPR048368">
    <property type="entry name" value="COG6_N"/>
</dbReference>
<dbReference type="PANTHER" id="PTHR21506">
    <property type="entry name" value="COMPONENT OF OLIGOMERIC GOLGI COMPLEX 6"/>
    <property type="match status" value="1"/>
</dbReference>
<dbReference type="PANTHER" id="PTHR21506:SF0">
    <property type="entry name" value="CONSERVED OLIGOMERIC GOLGI COMPLEX SUBUNIT 6"/>
    <property type="match status" value="1"/>
</dbReference>
<dbReference type="Pfam" id="PF20653">
    <property type="entry name" value="COG6_C"/>
    <property type="match status" value="1"/>
</dbReference>
<dbReference type="Pfam" id="PF06419">
    <property type="entry name" value="COG6_N"/>
    <property type="match status" value="1"/>
</dbReference>
<dbReference type="SMART" id="SM01087">
    <property type="entry name" value="COG6"/>
    <property type="match status" value="1"/>
</dbReference>
<name>COG6_CANGA</name>
<gene>
    <name type="primary">COG6</name>
    <name type="ordered locus">CAGL0G01496g</name>
</gene>
<comment type="function">
    <text evidence="1">Acts as a component of the peripheral membrane COG complex that is involved in intra-Golgi protein trafficking. COG is located at the cis-Golgi, and regulates tethering of retrograde intra-Golgi vesicles and possibly a number of other membrane trafficking events (By similarity).</text>
</comment>
<comment type="subcellular location">
    <subcellularLocation>
        <location evidence="1">Golgi apparatus membrane</location>
        <topology evidence="1">Peripheral membrane protein</topology>
    </subcellularLocation>
</comment>
<comment type="similarity">
    <text evidence="2">Belongs to the COG6 family.</text>
</comment>
<accession>Q6FTL7</accession>